<feature type="chain" id="PRO_0000297388" description="3-methyl-2-oxobutanoate hydroxymethyltransferase">
    <location>
        <begin position="1"/>
        <end position="272"/>
    </location>
</feature>
<feature type="region of interest" description="Disordered" evidence="2">
    <location>
        <begin position="251"/>
        <end position="272"/>
    </location>
</feature>
<feature type="compositionally biased region" description="Pro residues" evidence="2">
    <location>
        <begin position="262"/>
        <end position="272"/>
    </location>
</feature>
<feature type="active site" description="Proton acceptor" evidence="1">
    <location>
        <position position="185"/>
    </location>
</feature>
<feature type="binding site" evidence="1">
    <location>
        <begin position="42"/>
        <end position="43"/>
    </location>
    <ligand>
        <name>3-methyl-2-oxobutanoate</name>
        <dbReference type="ChEBI" id="CHEBI:11851"/>
    </ligand>
</feature>
<feature type="binding site" evidence="1">
    <location>
        <position position="42"/>
    </location>
    <ligand>
        <name>Mg(2+)</name>
        <dbReference type="ChEBI" id="CHEBI:18420"/>
    </ligand>
</feature>
<feature type="binding site" evidence="1">
    <location>
        <position position="86"/>
    </location>
    <ligand>
        <name>3-methyl-2-oxobutanoate</name>
        <dbReference type="ChEBI" id="CHEBI:11851"/>
    </ligand>
</feature>
<feature type="binding site" evidence="1">
    <location>
        <position position="86"/>
    </location>
    <ligand>
        <name>Mg(2+)</name>
        <dbReference type="ChEBI" id="CHEBI:18420"/>
    </ligand>
</feature>
<feature type="binding site" evidence="1">
    <location>
        <position position="116"/>
    </location>
    <ligand>
        <name>3-methyl-2-oxobutanoate</name>
        <dbReference type="ChEBI" id="CHEBI:11851"/>
    </ligand>
</feature>
<feature type="binding site" evidence="1">
    <location>
        <position position="118"/>
    </location>
    <ligand>
        <name>Mg(2+)</name>
        <dbReference type="ChEBI" id="CHEBI:18420"/>
    </ligand>
</feature>
<evidence type="ECO:0000255" key="1">
    <source>
        <dbReference type="HAMAP-Rule" id="MF_00156"/>
    </source>
</evidence>
<evidence type="ECO:0000256" key="2">
    <source>
        <dbReference type="SAM" id="MobiDB-lite"/>
    </source>
</evidence>
<evidence type="ECO:0000305" key="3"/>
<sequence>MRPAELIRFKQSGRAITMLTAWDALSAALVEEAGADVVLVGDSLAMVVLGHATTLPVTLEHMLHHTQAVCRGMSKPLAQQPLVVCDLPFLSYQCGLDRAVAAAGTILKESDAAAIKLEGGEPEIVAVVDRLVRMGIPVMGHLGLTPQAVHRLGYRRQGIDPRSQDKLHRQAQALQDAGCFSLVVEHVPSELAGRLRRTLSIPVIGIGAGPDCDGQVSVTADLLGLTPSQPPFTPARMQGRELSINALKSWLKEQRDQRATPTTPPPPPAPDC</sequence>
<name>PANB_SYNS3</name>
<comment type="function">
    <text evidence="1">Catalyzes the reversible reaction in which hydroxymethyl group from 5,10-methylenetetrahydrofolate is transferred onto alpha-ketoisovalerate to form ketopantoate.</text>
</comment>
<comment type="catalytic activity">
    <reaction evidence="1">
        <text>3-methyl-2-oxobutanoate + (6R)-5,10-methylene-5,6,7,8-tetrahydrofolate + H2O = 2-dehydropantoate + (6S)-5,6,7,8-tetrahydrofolate</text>
        <dbReference type="Rhea" id="RHEA:11824"/>
        <dbReference type="ChEBI" id="CHEBI:11561"/>
        <dbReference type="ChEBI" id="CHEBI:11851"/>
        <dbReference type="ChEBI" id="CHEBI:15377"/>
        <dbReference type="ChEBI" id="CHEBI:15636"/>
        <dbReference type="ChEBI" id="CHEBI:57453"/>
        <dbReference type="EC" id="2.1.2.11"/>
    </reaction>
</comment>
<comment type="cofactor">
    <cofactor evidence="1">
        <name>Mg(2+)</name>
        <dbReference type="ChEBI" id="CHEBI:18420"/>
    </cofactor>
    <text evidence="1">Binds 1 Mg(2+) ion per subunit.</text>
</comment>
<comment type="pathway">
    <text evidence="1">Cofactor biosynthesis; (R)-pantothenate biosynthesis; (R)-pantoate from 3-methyl-2-oxobutanoate: step 1/2.</text>
</comment>
<comment type="subunit">
    <text evidence="1">Homodecamer; pentamer of dimers.</text>
</comment>
<comment type="subcellular location">
    <subcellularLocation>
        <location evidence="1">Cytoplasm</location>
    </subcellularLocation>
</comment>
<comment type="similarity">
    <text evidence="1">Belongs to the PanB family.</text>
</comment>
<comment type="sequence caution" evidence="3">
    <conflict type="erroneous initiation">
        <sequence resource="EMBL-CDS" id="ABI45555"/>
    </conflict>
</comment>
<keyword id="KW-0963">Cytoplasm</keyword>
<keyword id="KW-0460">Magnesium</keyword>
<keyword id="KW-0479">Metal-binding</keyword>
<keyword id="KW-0566">Pantothenate biosynthesis</keyword>
<keyword id="KW-1185">Reference proteome</keyword>
<keyword id="KW-0808">Transferase</keyword>
<protein>
    <recommendedName>
        <fullName evidence="1">3-methyl-2-oxobutanoate hydroxymethyltransferase</fullName>
        <ecNumber evidence="1">2.1.2.11</ecNumber>
    </recommendedName>
    <alternativeName>
        <fullName evidence="1">Ketopantoate hydroxymethyltransferase</fullName>
        <shortName evidence="1">KPHMT</shortName>
    </alternativeName>
</protein>
<gene>
    <name evidence="1" type="primary">panB</name>
    <name type="ordered locus">sync_0730</name>
</gene>
<accession>Q0IC75</accession>
<proteinExistence type="inferred from homology"/>
<dbReference type="EC" id="2.1.2.11" evidence="1"/>
<dbReference type="EMBL" id="CP000435">
    <property type="protein sequence ID" value="ABI45555.1"/>
    <property type="status" value="ALT_INIT"/>
    <property type="molecule type" value="Genomic_DNA"/>
</dbReference>
<dbReference type="RefSeq" id="WP_041426382.1">
    <property type="nucleotide sequence ID" value="NC_008319.1"/>
</dbReference>
<dbReference type="SMR" id="Q0IC75"/>
<dbReference type="STRING" id="64471.sync_0730"/>
<dbReference type="KEGG" id="syg:sync_0730"/>
<dbReference type="eggNOG" id="COG0413">
    <property type="taxonomic scope" value="Bacteria"/>
</dbReference>
<dbReference type="HOGENOM" id="CLU_036645_1_0_3"/>
<dbReference type="OrthoDB" id="9781789at2"/>
<dbReference type="UniPathway" id="UPA00028">
    <property type="reaction ID" value="UER00003"/>
</dbReference>
<dbReference type="Proteomes" id="UP000001961">
    <property type="component" value="Chromosome"/>
</dbReference>
<dbReference type="GO" id="GO:0005737">
    <property type="term" value="C:cytoplasm"/>
    <property type="evidence" value="ECO:0007669"/>
    <property type="project" value="UniProtKB-SubCell"/>
</dbReference>
<dbReference type="GO" id="GO:0003864">
    <property type="term" value="F:3-methyl-2-oxobutanoate hydroxymethyltransferase activity"/>
    <property type="evidence" value="ECO:0007669"/>
    <property type="project" value="UniProtKB-UniRule"/>
</dbReference>
<dbReference type="GO" id="GO:0000287">
    <property type="term" value="F:magnesium ion binding"/>
    <property type="evidence" value="ECO:0007669"/>
    <property type="project" value="TreeGrafter"/>
</dbReference>
<dbReference type="GO" id="GO:0015940">
    <property type="term" value="P:pantothenate biosynthetic process"/>
    <property type="evidence" value="ECO:0007669"/>
    <property type="project" value="UniProtKB-UniRule"/>
</dbReference>
<dbReference type="CDD" id="cd06557">
    <property type="entry name" value="KPHMT-like"/>
    <property type="match status" value="1"/>
</dbReference>
<dbReference type="Gene3D" id="3.20.20.60">
    <property type="entry name" value="Phosphoenolpyruvate-binding domains"/>
    <property type="match status" value="1"/>
</dbReference>
<dbReference type="HAMAP" id="MF_00156">
    <property type="entry name" value="PanB"/>
    <property type="match status" value="1"/>
</dbReference>
<dbReference type="InterPro" id="IPR003700">
    <property type="entry name" value="Pantoate_hydroxy_MeTrfase"/>
</dbReference>
<dbReference type="InterPro" id="IPR015813">
    <property type="entry name" value="Pyrv/PenolPyrv_kinase-like_dom"/>
</dbReference>
<dbReference type="InterPro" id="IPR040442">
    <property type="entry name" value="Pyrv_kinase-like_dom_sf"/>
</dbReference>
<dbReference type="NCBIfam" id="TIGR00222">
    <property type="entry name" value="panB"/>
    <property type="match status" value="1"/>
</dbReference>
<dbReference type="NCBIfam" id="NF001452">
    <property type="entry name" value="PRK00311.1"/>
    <property type="match status" value="1"/>
</dbReference>
<dbReference type="PANTHER" id="PTHR20881">
    <property type="entry name" value="3-METHYL-2-OXOBUTANOATE HYDROXYMETHYLTRANSFERASE"/>
    <property type="match status" value="1"/>
</dbReference>
<dbReference type="PANTHER" id="PTHR20881:SF0">
    <property type="entry name" value="3-METHYL-2-OXOBUTANOATE HYDROXYMETHYLTRANSFERASE"/>
    <property type="match status" value="1"/>
</dbReference>
<dbReference type="Pfam" id="PF02548">
    <property type="entry name" value="Pantoate_transf"/>
    <property type="match status" value="1"/>
</dbReference>
<dbReference type="PIRSF" id="PIRSF000388">
    <property type="entry name" value="Pantoate_hydroxy_MeTrfase"/>
    <property type="match status" value="1"/>
</dbReference>
<dbReference type="SUPFAM" id="SSF51621">
    <property type="entry name" value="Phosphoenolpyruvate/pyruvate domain"/>
    <property type="match status" value="1"/>
</dbReference>
<reference key="1">
    <citation type="journal article" date="2006" name="Proc. Natl. Acad. Sci. U.S.A.">
        <title>Genome sequence of Synechococcus CC9311: insights into adaptation to a coastal environment.</title>
        <authorList>
            <person name="Palenik B."/>
            <person name="Ren Q."/>
            <person name="Dupont C.L."/>
            <person name="Myers G.S."/>
            <person name="Heidelberg J.F."/>
            <person name="Badger J.H."/>
            <person name="Madupu R."/>
            <person name="Nelson W.C."/>
            <person name="Brinkac L.M."/>
            <person name="Dodson R.J."/>
            <person name="Durkin A.S."/>
            <person name="Daugherty S.C."/>
            <person name="Sullivan S.A."/>
            <person name="Khouri H."/>
            <person name="Mohamoud Y."/>
            <person name="Halpin R."/>
            <person name="Paulsen I.T."/>
        </authorList>
    </citation>
    <scope>NUCLEOTIDE SEQUENCE [LARGE SCALE GENOMIC DNA]</scope>
    <source>
        <strain>CC9311</strain>
    </source>
</reference>
<organism>
    <name type="scientific">Synechococcus sp. (strain CC9311)</name>
    <dbReference type="NCBI Taxonomy" id="64471"/>
    <lineage>
        <taxon>Bacteria</taxon>
        <taxon>Bacillati</taxon>
        <taxon>Cyanobacteriota</taxon>
        <taxon>Cyanophyceae</taxon>
        <taxon>Synechococcales</taxon>
        <taxon>Synechococcaceae</taxon>
        <taxon>Synechococcus</taxon>
    </lineage>
</organism>